<name>GLGE_ARCHD</name>
<evidence type="ECO:0000255" key="1">
    <source>
        <dbReference type="HAMAP-Rule" id="MF_02124"/>
    </source>
</evidence>
<gene>
    <name evidence="1" type="primary">glgE</name>
    <name type="ordered locus">Arch_0386</name>
</gene>
<organism>
    <name type="scientific">Arcanobacterium haemolyticum (strain ATCC 9345 / DSM 20595 / CCM 5947 / CCUG 17215 / LMG 16163 / NBRC 15585 / NCTC 8452 / 11018)</name>
    <dbReference type="NCBI Taxonomy" id="644284"/>
    <lineage>
        <taxon>Bacteria</taxon>
        <taxon>Bacillati</taxon>
        <taxon>Actinomycetota</taxon>
        <taxon>Actinomycetes</taxon>
        <taxon>Actinomycetales</taxon>
        <taxon>Actinomycetaceae</taxon>
        <taxon>Arcanobacterium</taxon>
    </lineage>
</organism>
<proteinExistence type="inferred from homology"/>
<keyword id="KW-0119">Carbohydrate metabolism</keyword>
<keyword id="KW-0328">Glycosyltransferase</keyword>
<keyword id="KW-1185">Reference proteome</keyword>
<keyword id="KW-0808">Transferase</keyword>
<dbReference type="EC" id="2.4.99.16" evidence="1"/>
<dbReference type="EMBL" id="CP002045">
    <property type="protein sequence ID" value="ADH92141.1"/>
    <property type="molecule type" value="Genomic_DNA"/>
</dbReference>
<dbReference type="RefSeq" id="WP_013169639.1">
    <property type="nucleotide sequence ID" value="NC_014218.1"/>
</dbReference>
<dbReference type="SMR" id="D7BMJ2"/>
<dbReference type="STRING" id="644284.Arch_0386"/>
<dbReference type="CAZy" id="GH13">
    <property type="family name" value="Glycoside Hydrolase Family 13"/>
</dbReference>
<dbReference type="KEGG" id="ahe:Arch_0386"/>
<dbReference type="eggNOG" id="COG0366">
    <property type="taxonomic scope" value="Bacteria"/>
</dbReference>
<dbReference type="HOGENOM" id="CLU_015798_0_0_11"/>
<dbReference type="OrthoDB" id="9805159at2"/>
<dbReference type="Proteomes" id="UP000000376">
    <property type="component" value="Chromosome"/>
</dbReference>
<dbReference type="GO" id="GO:0016758">
    <property type="term" value="F:hexosyltransferase activity"/>
    <property type="evidence" value="ECO:0007669"/>
    <property type="project" value="UniProtKB-UniRule"/>
</dbReference>
<dbReference type="GO" id="GO:0004553">
    <property type="term" value="F:hydrolase activity, hydrolyzing O-glycosyl compounds"/>
    <property type="evidence" value="ECO:0007669"/>
    <property type="project" value="InterPro"/>
</dbReference>
<dbReference type="GO" id="GO:0030979">
    <property type="term" value="P:alpha-glucan biosynthetic process"/>
    <property type="evidence" value="ECO:0007669"/>
    <property type="project" value="UniProtKB-UniRule"/>
</dbReference>
<dbReference type="Gene3D" id="3.20.20.80">
    <property type="entry name" value="Glycosidases"/>
    <property type="match status" value="1"/>
</dbReference>
<dbReference type="Gene3D" id="2.60.40.1180">
    <property type="entry name" value="Golgi alpha-mannosidase II"/>
    <property type="match status" value="1"/>
</dbReference>
<dbReference type="Gene3D" id="2.60.40.10">
    <property type="entry name" value="Immunoglobulins"/>
    <property type="match status" value="1"/>
</dbReference>
<dbReference type="Gene3D" id="1.20.58.80">
    <property type="entry name" value="Phosphotransferase system, lactose/cellobiose-type IIA subunit"/>
    <property type="match status" value="1"/>
</dbReference>
<dbReference type="HAMAP" id="MF_02124">
    <property type="entry name" value="GlgE"/>
    <property type="match status" value="1"/>
</dbReference>
<dbReference type="InterPro" id="IPR026585">
    <property type="entry name" value="GlgE"/>
</dbReference>
<dbReference type="InterPro" id="IPR049171">
    <property type="entry name" value="GLGE_C"/>
</dbReference>
<dbReference type="InterPro" id="IPR021828">
    <property type="entry name" value="GlgE_dom_N/S"/>
</dbReference>
<dbReference type="InterPro" id="IPR006047">
    <property type="entry name" value="Glyco_hydro_13_cat_dom"/>
</dbReference>
<dbReference type="InterPro" id="IPR013780">
    <property type="entry name" value="Glyco_hydro_b"/>
</dbReference>
<dbReference type="InterPro" id="IPR017853">
    <property type="entry name" value="Glycoside_hydrolase_SF"/>
</dbReference>
<dbReference type="InterPro" id="IPR013783">
    <property type="entry name" value="Ig-like_fold"/>
</dbReference>
<dbReference type="PANTHER" id="PTHR47786">
    <property type="entry name" value="ALPHA-1,4-GLUCAN:MALTOSE-1-PHOSPHATE MALTOSYLTRANSFERASE"/>
    <property type="match status" value="1"/>
</dbReference>
<dbReference type="PANTHER" id="PTHR47786:SF2">
    <property type="entry name" value="GLYCOSYL HYDROLASE FAMILY 13 CATALYTIC DOMAIN-CONTAINING PROTEIN"/>
    <property type="match status" value="1"/>
</dbReference>
<dbReference type="Pfam" id="PF00128">
    <property type="entry name" value="Alpha-amylase"/>
    <property type="match status" value="1"/>
</dbReference>
<dbReference type="Pfam" id="PF21702">
    <property type="entry name" value="GLGE_C"/>
    <property type="match status" value="1"/>
</dbReference>
<dbReference type="Pfam" id="PF11896">
    <property type="entry name" value="GlgE_dom_N_S"/>
    <property type="match status" value="1"/>
</dbReference>
<dbReference type="SMART" id="SM00642">
    <property type="entry name" value="Aamy"/>
    <property type="match status" value="1"/>
</dbReference>
<dbReference type="SUPFAM" id="SSF51445">
    <property type="entry name" value="(Trans)glycosidases"/>
    <property type="match status" value="1"/>
</dbReference>
<comment type="function">
    <text evidence="1">Maltosyltransferase that uses maltose 1-phosphate (M1P) as the sugar donor to elongate linear or branched alpha-(1-&gt;4)-glucans. Is involved in a branched alpha-glucan biosynthetic pathway from trehalose, together with TreS, Mak and GlgB.</text>
</comment>
<comment type="catalytic activity">
    <reaction evidence="1">
        <text>alpha-maltose 1-phosphate + [(1-&gt;4)-alpha-D-glucosyl](n) = [(1-&gt;4)-alpha-D-glucosyl](n+2) + phosphate</text>
        <dbReference type="Rhea" id="RHEA:42692"/>
        <dbReference type="Rhea" id="RHEA-COMP:9584"/>
        <dbReference type="Rhea" id="RHEA-COMP:10183"/>
        <dbReference type="ChEBI" id="CHEBI:15444"/>
        <dbReference type="ChEBI" id="CHEBI:43474"/>
        <dbReference type="ChEBI" id="CHEBI:63576"/>
        <dbReference type="EC" id="2.4.99.16"/>
    </reaction>
</comment>
<comment type="subunit">
    <text evidence="1">Homodimer.</text>
</comment>
<comment type="similarity">
    <text evidence="1">Belongs to the glycosyl hydrolase 13 family. GlgE subfamily.</text>
</comment>
<accession>D7BMJ2</accession>
<protein>
    <recommendedName>
        <fullName evidence="1">Alpha-1,4-glucan:maltose-1-phosphate maltosyltransferase</fullName>
        <shortName evidence="1">GMPMT</shortName>
        <ecNumber evidence="1">2.4.99.16</ecNumber>
    </recommendedName>
    <alternativeName>
        <fullName evidence="1">(1-&gt;4)-alpha-D-glucan:maltose-1-phosphate alpha-D-maltosyltransferase</fullName>
    </alternativeName>
</protein>
<sequence length="691" mass="76690">MSTLQHKTSSARRSSRRSVAAPDFVAVSRIPIVEVSPQLLDGTAPVKSTVDESFPVQATIFREGHDKFAARAVLVDGAGHTVDSVPMCDVSPGLFRFEGWLTPRVPGPHRFFVEAWSDPYATWLHNAEIKVPAGIDVGLVFAEAEVLFKAALKGTPVRSGERAAIRDALTVISKRRALPEVKLAAARSEEVRAAFAAYPVKELVSRSREYPVFVDRVRALVGSWYELFPRSVGATRDSESGEWTSGTLRTAATDLDRVAGMGFDVVYIPPVHPIGLTNRKGRNNSLTAVPGDPGSPYAIGSDAAGGHDAIEPSLGTFEDFDVFVGRAHELGMEVALDLALQCSPDHPWVKEHPEWFTARPDGTIAYAENPPKKYQDIYPLNFDNDPEGIYKEIKRVVELWVAHGVTIFRVDNPHTKPVGFWQRLLAEFRVEHPEVIFLAEAFTNPPMMQTLGTVGFHQSYTYFTWRNERQEIEEYLMEVSHESSHRMRPAFWPTTHDILTPYIQRGGISAAAIRAILAATGSPTWGIYNGYELIENIARPGAEEHIDNEKYEFKPRNYALAEQNGMATLLTMLNSIRSKHKALQRLRNVTINPTSNDKIVSFTKVARPEETADGVMDAVIVVVNLDPYASRDATVYLDLSPFGISPRWDGGPIIEVTDEMSGETYLWNEAPYVHLDPHGQVAHVLSVKVLS</sequence>
<feature type="chain" id="PRO_0000413890" description="Alpha-1,4-glucan:maltose-1-phosphate maltosyltransferase">
    <location>
        <begin position="1"/>
        <end position="691"/>
    </location>
</feature>
<feature type="active site" description="Nucleophile" evidence="1">
    <location>
        <position position="411"/>
    </location>
</feature>
<feature type="active site" description="Proton donor" evidence="1">
    <location>
        <position position="440"/>
    </location>
</feature>
<feature type="binding site" evidence="1">
    <location>
        <position position="280"/>
    </location>
    <ligand>
        <name>alpha-maltose 1-phosphate</name>
        <dbReference type="ChEBI" id="CHEBI:63576"/>
    </ligand>
</feature>
<feature type="binding site" evidence="1">
    <location>
        <position position="341"/>
    </location>
    <ligand>
        <name>alpha-maltose 1-phosphate</name>
        <dbReference type="ChEBI" id="CHEBI:63576"/>
    </ligand>
</feature>
<feature type="binding site" evidence="1">
    <location>
        <position position="376"/>
    </location>
    <ligand>
        <name>alpha-maltose 1-phosphate</name>
        <dbReference type="ChEBI" id="CHEBI:63576"/>
    </ligand>
</feature>
<feature type="binding site" evidence="1">
    <location>
        <position position="412"/>
    </location>
    <ligand>
        <name>alpha-maltose 1-phosphate</name>
        <dbReference type="ChEBI" id="CHEBI:63576"/>
    </ligand>
</feature>
<feature type="binding site" evidence="1">
    <location>
        <begin position="550"/>
        <end position="551"/>
    </location>
    <ligand>
        <name>alpha-maltose 1-phosphate</name>
        <dbReference type="ChEBI" id="CHEBI:63576"/>
    </ligand>
</feature>
<feature type="site" description="Transition state stabilizer" evidence="1">
    <location>
        <position position="497"/>
    </location>
</feature>
<reference key="1">
    <citation type="journal article" date="2010" name="Stand. Genomic Sci.">
        <title>Complete genome sequence of Arcanobacterium haemolyticum type strain (11018).</title>
        <authorList>
            <person name="Yasawong M."/>
            <person name="Teshima H."/>
            <person name="Lapidus A."/>
            <person name="Nolan M."/>
            <person name="Lucas S."/>
            <person name="Glavina Del Rio T."/>
            <person name="Tice H."/>
            <person name="Cheng J.F."/>
            <person name="Bruce D."/>
            <person name="Detter C."/>
            <person name="Tapia R."/>
            <person name="Han C."/>
            <person name="Goodwin L."/>
            <person name="Pitluck S."/>
            <person name="Liolios K."/>
            <person name="Ivanova N."/>
            <person name="Mavromatis K."/>
            <person name="Mikhailova N."/>
            <person name="Pati A."/>
            <person name="Chen A."/>
            <person name="Palaniappan K."/>
            <person name="Land M."/>
            <person name="Hauser L."/>
            <person name="Chang Y.J."/>
            <person name="Jeffries C.D."/>
            <person name="Rohde M."/>
            <person name="Sikorski J."/>
            <person name="Pukall R."/>
            <person name="Goker M."/>
            <person name="Woyke T."/>
            <person name="Bristow J."/>
            <person name="Eisen J.A."/>
            <person name="Markowitz V."/>
            <person name="Hugenholtz P."/>
            <person name="Kyrpides N.C."/>
            <person name="Klenk H.P."/>
        </authorList>
    </citation>
    <scope>NUCLEOTIDE SEQUENCE [LARGE SCALE GENOMIC DNA]</scope>
    <source>
        <strain>ATCC 9345 / DSM 20595 / CCM 5947 / CCUG 17215 / LMG 16163 / NBRC 15585 / NCTC 8452 / 11018</strain>
    </source>
</reference>